<feature type="chain" id="PRO_0000070254" description="G-protein coupled receptor homolog K2">
    <location>
        <begin position="1"/>
        <end position="370"/>
    </location>
</feature>
<feature type="topological domain" description="Extracellular" evidence="1">
    <location>
        <begin position="1"/>
        <end position="61"/>
    </location>
</feature>
<feature type="transmembrane region" description="Helical; Name=1" evidence="1">
    <location>
        <begin position="62"/>
        <end position="82"/>
    </location>
</feature>
<feature type="topological domain" description="Cytoplasmic" evidence="1">
    <location>
        <begin position="83"/>
        <end position="94"/>
    </location>
</feature>
<feature type="transmembrane region" description="Helical; Name=2" evidence="1">
    <location>
        <begin position="95"/>
        <end position="115"/>
    </location>
</feature>
<feature type="topological domain" description="Extracellular" evidence="1">
    <location>
        <begin position="116"/>
        <end position="131"/>
    </location>
</feature>
<feature type="transmembrane region" description="Helical; Name=3" evidence="1">
    <location>
        <begin position="132"/>
        <end position="152"/>
    </location>
</feature>
<feature type="topological domain" description="Cytoplasmic" evidence="1">
    <location>
        <begin position="153"/>
        <end position="171"/>
    </location>
</feature>
<feature type="transmembrane region" description="Helical; Name=4" evidence="1">
    <location>
        <begin position="172"/>
        <end position="192"/>
    </location>
</feature>
<feature type="topological domain" description="Extracellular" evidence="1">
    <location>
        <begin position="193"/>
        <end position="223"/>
    </location>
</feature>
<feature type="transmembrane region" description="Helical; Name=5" evidence="1">
    <location>
        <begin position="224"/>
        <end position="244"/>
    </location>
</feature>
<feature type="topological domain" description="Cytoplasmic" evidence="1">
    <location>
        <begin position="245"/>
        <end position="265"/>
    </location>
</feature>
<feature type="transmembrane region" description="Helical; Name=6" evidence="1">
    <location>
        <begin position="266"/>
        <end position="286"/>
    </location>
</feature>
<feature type="topological domain" description="Extracellular" evidence="1">
    <location>
        <begin position="287"/>
        <end position="300"/>
    </location>
</feature>
<feature type="transmembrane region" description="Helical; Name=7" evidence="1">
    <location>
        <begin position="301"/>
        <end position="321"/>
    </location>
</feature>
<feature type="topological domain" description="Cytoplasmic" evidence="1">
    <location>
        <begin position="322"/>
        <end position="370"/>
    </location>
</feature>
<feature type="glycosylation site" description="N-linked (GlcNAc...) asparagine; by host" evidence="1">
    <location>
        <position position="6"/>
    </location>
</feature>
<feature type="glycosylation site" description="N-linked (GlcNAc...) asparagine; by host" evidence="1">
    <location>
        <position position="51"/>
    </location>
</feature>
<organismHost>
    <name type="scientific">Sus scrofa</name>
    <name type="common">Pig</name>
    <dbReference type="NCBI Taxonomy" id="9823"/>
</organismHost>
<organism>
    <name type="scientific">Swinepox virus (strain Kasza)</name>
    <name type="common">SWPV</name>
    <dbReference type="NCBI Taxonomy" id="10277"/>
    <lineage>
        <taxon>Viruses</taxon>
        <taxon>Varidnaviria</taxon>
        <taxon>Bamfordvirae</taxon>
        <taxon>Nucleocytoviricota</taxon>
        <taxon>Pokkesviricetes</taxon>
        <taxon>Chitovirales</taxon>
        <taxon>Poxviridae</taxon>
        <taxon>Chordopoxvirinae</taxon>
        <taxon>Suipoxvirus</taxon>
        <taxon>Swinepox virus</taxon>
    </lineage>
</organism>
<dbReference type="EMBL" id="L21931">
    <property type="protein sequence ID" value="AAC37873.1"/>
    <property type="molecule type" value="Unassigned_DNA"/>
</dbReference>
<dbReference type="SMR" id="Q08520"/>
<dbReference type="GO" id="GO:0020002">
    <property type="term" value="C:host cell plasma membrane"/>
    <property type="evidence" value="ECO:0007669"/>
    <property type="project" value="UniProtKB-SubCell"/>
</dbReference>
<dbReference type="GO" id="GO:0016020">
    <property type="term" value="C:membrane"/>
    <property type="evidence" value="ECO:0007669"/>
    <property type="project" value="UniProtKB-KW"/>
</dbReference>
<dbReference type="GO" id="GO:0019957">
    <property type="term" value="F:C-C chemokine binding"/>
    <property type="evidence" value="ECO:0007669"/>
    <property type="project" value="TreeGrafter"/>
</dbReference>
<dbReference type="GO" id="GO:0016493">
    <property type="term" value="F:C-C chemokine receptor activity"/>
    <property type="evidence" value="ECO:0007669"/>
    <property type="project" value="TreeGrafter"/>
</dbReference>
<dbReference type="GO" id="GO:0019722">
    <property type="term" value="P:calcium-mediated signaling"/>
    <property type="evidence" value="ECO:0007669"/>
    <property type="project" value="TreeGrafter"/>
</dbReference>
<dbReference type="GO" id="GO:0060326">
    <property type="term" value="P:cell chemotaxis"/>
    <property type="evidence" value="ECO:0007669"/>
    <property type="project" value="TreeGrafter"/>
</dbReference>
<dbReference type="GO" id="GO:0006955">
    <property type="term" value="P:immune response"/>
    <property type="evidence" value="ECO:0007669"/>
    <property type="project" value="TreeGrafter"/>
</dbReference>
<dbReference type="GO" id="GO:0007204">
    <property type="term" value="P:positive regulation of cytosolic calcium ion concentration"/>
    <property type="evidence" value="ECO:0007669"/>
    <property type="project" value="TreeGrafter"/>
</dbReference>
<dbReference type="CDD" id="cd14984">
    <property type="entry name" value="7tmA_Chemokine_R"/>
    <property type="match status" value="1"/>
</dbReference>
<dbReference type="Gene3D" id="1.20.1070.10">
    <property type="entry name" value="Rhodopsin 7-helix transmembrane proteins"/>
    <property type="match status" value="1"/>
</dbReference>
<dbReference type="InterPro" id="IPR050119">
    <property type="entry name" value="CCR1-9-like"/>
</dbReference>
<dbReference type="InterPro" id="IPR000355">
    <property type="entry name" value="Chemokine_rcpt"/>
</dbReference>
<dbReference type="InterPro" id="IPR000276">
    <property type="entry name" value="GPCR_Rhodpsn"/>
</dbReference>
<dbReference type="InterPro" id="IPR017452">
    <property type="entry name" value="GPCR_Rhodpsn_7TM"/>
</dbReference>
<dbReference type="PANTHER" id="PTHR10489">
    <property type="entry name" value="CELL ADHESION MOLECULE"/>
    <property type="match status" value="1"/>
</dbReference>
<dbReference type="PANTHER" id="PTHR10489:SF932">
    <property type="entry name" value="G-PROTEIN COUPLED RECEPTORS FAMILY 1 PROFILE DOMAIN-CONTAINING PROTEIN"/>
    <property type="match status" value="1"/>
</dbReference>
<dbReference type="Pfam" id="PF00001">
    <property type="entry name" value="7tm_1"/>
    <property type="match status" value="1"/>
</dbReference>
<dbReference type="PRINTS" id="PR00657">
    <property type="entry name" value="CCCHEMOKINER"/>
</dbReference>
<dbReference type="PRINTS" id="PR00237">
    <property type="entry name" value="GPCRRHODOPSN"/>
</dbReference>
<dbReference type="SUPFAM" id="SSF81321">
    <property type="entry name" value="Family A G protein-coupled receptor-like"/>
    <property type="match status" value="1"/>
</dbReference>
<dbReference type="PROSITE" id="PS00237">
    <property type="entry name" value="G_PROTEIN_RECEP_F1_1"/>
    <property type="match status" value="1"/>
</dbReference>
<dbReference type="PROSITE" id="PS50262">
    <property type="entry name" value="G_PROTEIN_RECEP_F1_2"/>
    <property type="match status" value="1"/>
</dbReference>
<reference key="1">
    <citation type="journal article" date="1993" name="Virology">
        <title>DNA sequence analysis of conserved and unique regions of swinepox virus: identification of genetic elements supporting phenotypic observations including a novel G protein-coupled receptor homologue.</title>
        <authorList>
            <person name="Massung R.F."/>
            <person name="Jayarama V."/>
            <person name="Moyer R.W."/>
        </authorList>
    </citation>
    <scope>NUCLEOTIDE SEQUENCE</scope>
</reference>
<evidence type="ECO:0000255" key="1"/>
<evidence type="ECO:0000255" key="2">
    <source>
        <dbReference type="PROSITE-ProRule" id="PRU00521"/>
    </source>
</evidence>
<gene>
    <name type="ORF">K2R</name>
</gene>
<comment type="function">
    <text>Putative chemokine receptor.</text>
</comment>
<comment type="subcellular location">
    <subcellularLocation>
        <location>Host cell membrane</location>
        <topology>Multi-pass membrane protein</topology>
    </subcellularLocation>
</comment>
<comment type="similarity">
    <text evidence="2">Belongs to the G-protein coupled receptor 1 family.</text>
</comment>
<keyword id="KW-0297">G-protein coupled receptor</keyword>
<keyword id="KW-0325">Glycoprotein</keyword>
<keyword id="KW-1032">Host cell membrane</keyword>
<keyword id="KW-1043">Host membrane</keyword>
<keyword id="KW-0472">Membrane</keyword>
<keyword id="KW-0675">Receptor</keyword>
<keyword id="KW-0807">Transducer</keyword>
<keyword id="KW-0812">Transmembrane</keyword>
<keyword id="KW-1133">Transmembrane helix</keyword>
<protein>
    <recommendedName>
        <fullName>G-protein coupled receptor homolog K2</fullName>
    </recommendedName>
</protein>
<proteinExistence type="inferred from homology"/>
<name>VK02_SWPVK</name>
<accession>Q08520</accession>
<sequence>MTSPTNSTMLTYTTNNYYDDDYYEYSTITDYYNTINNDITSSSVIKAFDNNCTFLEDTKYHIIVIHIILFLLGSIGNIFVVSLIAFKRNKSITDIYILNLSMSDCIFVFQIPFIVYSKLDQWIFGNILCKIMSVLYYVGFFSNMFIITLMSIDRYFAIVHPIKRQPYRTKRIGILMCCSAWLLSLILSSPVSKLYENIPHMSKDIYQCTLTNENDSIIAFIKRLMQIEITILGFLIPIIIFVYCYYRIFTTVVRLRNRRKYKSIKIVLMIVVCSLICWIPLYIVLMIATIVSLYTSNIFRHLCLYLNLAYAITFSETISLARCCINPIIYTLIGEHVRSRISSICSCIYRDNRIRKKLFSRKSSSSSNII</sequence>